<dbReference type="EMBL" id="S68561">
    <property type="protein sequence ID" value="AAC60723.1"/>
    <property type="molecule type" value="Genomic_RNA"/>
</dbReference>
<dbReference type="EMBL" id="Z25771">
    <property type="protein sequence ID" value="CAA81032.1"/>
    <property type="molecule type" value="Genomic_RNA"/>
</dbReference>
<dbReference type="EMBL" id="L23513">
    <property type="protein sequence ID" value="AAC34717.1"/>
    <property type="molecule type" value="Genomic_RNA"/>
</dbReference>
<dbReference type="PDB" id="5EWN">
    <property type="method" value="X-ray"/>
    <property type="resolution" value="2.60 A"/>
    <property type="chains" value="A/B=80-429"/>
</dbReference>
<dbReference type="PDB" id="5EWO">
    <property type="method" value="X-ray"/>
    <property type="resolution" value="0.95 A"/>
    <property type="chains" value="A=429-645"/>
</dbReference>
<dbReference type="PDB" id="9CBN">
    <property type="method" value="EM"/>
    <property type="resolution" value="3.33 A"/>
    <property type="chains" value="C/D=429-645"/>
</dbReference>
<dbReference type="PDBsum" id="5EWN"/>
<dbReference type="PDBsum" id="5EWO"/>
<dbReference type="PDBsum" id="9CBN"/>
<dbReference type="EMDB" id="EMD-45427"/>
<dbReference type="SMR" id="O12792"/>
<dbReference type="KEGG" id="vg:29030991"/>
<dbReference type="Proteomes" id="UP000001650">
    <property type="component" value="Genome"/>
</dbReference>
<dbReference type="Proteomes" id="UP000159013">
    <property type="component" value="Genome"/>
</dbReference>
<dbReference type="GO" id="GO:0043655">
    <property type="term" value="C:host extracellular space"/>
    <property type="evidence" value="ECO:0007669"/>
    <property type="project" value="UniProtKB-SubCell"/>
</dbReference>
<dbReference type="GO" id="GO:0039617">
    <property type="term" value="C:T=3 icosahedral viral capsid"/>
    <property type="evidence" value="ECO:0000314"/>
    <property type="project" value="UniProtKB"/>
</dbReference>
<dbReference type="GO" id="GO:0075512">
    <property type="term" value="P:clathrin-dependent endocytosis of virus by host cell"/>
    <property type="evidence" value="ECO:0000250"/>
    <property type="project" value="UniProtKB"/>
</dbReference>
<dbReference type="FunFam" id="2.60.120.20:FF:000007">
    <property type="entry name" value="Capsid polyprotein VP90"/>
    <property type="match status" value="1"/>
</dbReference>
<dbReference type="Gene3D" id="2.60.120.20">
    <property type="match status" value="1"/>
</dbReference>
<dbReference type="InterPro" id="IPR004337">
    <property type="entry name" value="Astro_capsid_N"/>
</dbReference>
<dbReference type="InterPro" id="IPR022027">
    <property type="entry name" value="Astro_capsid_p"/>
</dbReference>
<dbReference type="InterPro" id="IPR029053">
    <property type="entry name" value="Viral_coat"/>
</dbReference>
<dbReference type="Pfam" id="PF03115">
    <property type="entry name" value="Astro_capsid_N"/>
    <property type="match status" value="1"/>
</dbReference>
<dbReference type="Pfam" id="PF12226">
    <property type="entry name" value="Astro_capsid_p"/>
    <property type="match status" value="1"/>
</dbReference>
<keyword id="KW-0002">3D-structure</keyword>
<keyword id="KW-0167">Capsid protein</keyword>
<keyword id="KW-1165">Clathrin-mediated endocytosis of virus by host</keyword>
<keyword id="KW-1185">Reference proteome</keyword>
<keyword id="KW-1142">T=3 icosahedral capsid protein</keyword>
<keyword id="KW-1162">Viral penetration into host cytoplasm</keyword>
<keyword id="KW-0946">Virion</keyword>
<keyword id="KW-1164">Virus endocytosis by host</keyword>
<keyword id="KW-1160">Virus entry into host cell</keyword>
<accession>O12792</accession>
<accession>O12498</accession>
<accession>Q67725</accession>
<accession>Q82452</accession>
<comment type="function">
    <molecule>Capsid polyprotein VP90</molecule>
    <text evidence="1">The capsid polyprotein VP90 self-assembles and undergoes a proteolytic cleavage by host caspases to yield the immature VP70 virion.</text>
</comment>
<comment type="function">
    <molecule>Capsid polyprotein VP70</molecule>
    <text evidence="1">The immature virion is composed of 180 VP70 subunits with 90 dimeric spikes and displays a T=3 icosahedral symmetry (By similarity). During maturation, VP70 undergoes a loss of 60 peripentonal spikes, which likely plays an important role in viral infectivity (By similarity).</text>
</comment>
<comment type="function">
    <molecule>Core protein VP34</molecule>
    <text evidence="4">Self-assembles to form an icosahedral capsid with a T=3 symmetry, about 43 nm in diameter (PubMed:26656707). This forms contains only 30 spikes located on the icosahedral 2-fold axes (PubMed:26656707).</text>
</comment>
<comment type="function">
    <molecule>Spike protein VP27</molecule>
    <text evidence="1 4 7">VP25 and VP27 Forms the spikes at the surface of the virion (PubMed:26656707). This forms contains only 30 spikes located on the icosahedral 2-fold axes (PubMed:26656707). Plays a role in the attachment to target host cell (Probable). This attachment induces virion internalization through clathrin-dependent endocytosis (By similarity).</text>
</comment>
<comment type="function">
    <molecule>Spike protein VP25</molecule>
    <text evidence="1 4 5">VP25 and VP27 Forms the spikes at the surface of the virion (PubMed:26656707). This forms contains only 30 spikes located on the icosahedral 2-fold axes (PubMed:26656707). Plays a role in the attachment to target host cell (PubMed:33396308). This attachment induces virion internalization through clathrin-dependent endocytosis (By similarity).</text>
</comment>
<comment type="subunit">
    <molecule>Spike protein VP27</molecule>
    <text evidence="1">Heterodimer with spike protein VP25 (By similarity). The spikes form a globular dimer with 30 spikes covering the mature virion (By similarity). Spike protein VP25 that lacks the core attachment region may need to dimerize with spike protein VP27 to remain stably bound to the viral particle (By similarity).</text>
</comment>
<comment type="subunit">
    <molecule>Spike protein VP25</molecule>
    <text evidence="1 5">Heterodimer with spike protein VP27 (By similarity). The spikes form a globular dimer with 30 spikes covering the mature virion (By similarity). Spike protein VP25 that lacks the core attachment region may need to dimerize with spike protein VP27 to remain stably bound to the viral particle (By similarity). Interacts with host PDIA4; this interaction plays a role during virus entry into the host cell (PubMed:33396308).</text>
</comment>
<comment type="subcellular location">
    <molecule>Capsid polyprotein VP90</molecule>
    <subcellularLocation>
        <location evidence="1">Virion</location>
    </subcellularLocation>
    <text evidence="1">Immature capsid.</text>
</comment>
<comment type="subcellular location">
    <molecule>Capsid polyprotein VP70</molecule>
    <subcellularLocation>
        <location evidence="1">Virion</location>
    </subcellularLocation>
    <text evidence="1">Immature capsid after cleavage by host caspases.</text>
</comment>
<comment type="subcellular location">
    <molecule>Core protein VP34</molecule>
    <subcellularLocation>
        <location evidence="4">Virion</location>
    </subcellularLocation>
    <text evidence="4">Capsid.</text>
</comment>
<comment type="subcellular location">
    <molecule>Spike protein VP27</molecule>
    <subcellularLocation>
        <location evidence="4">Virion</location>
    </subcellularLocation>
    <text evidence="4">Capsid.</text>
</comment>
<comment type="subcellular location">
    <molecule>Spike protein VP25</molecule>
    <subcellularLocation>
        <location evidence="8">Host extracellular space</location>
    </subcellularLocation>
    <subcellularLocation>
        <location>Virion</location>
    </subcellularLocation>
    <text evidence="4 7">Capsid (PubMed:26656707). Spike protein VP25 that lacks the core attachment region may need to dimerize with spike protein VP27 to remain stably bound to the viral particle (Probable).</text>
</comment>
<comment type="domain">
    <molecule>Spike protein VP27</molecule>
    <text evidence="1">Contains the core attachment region and the P2 globular region.</text>
</comment>
<comment type="domain">
    <molecule>Spike protein VP25</molecule>
    <text evidence="1">Contains the P2 globular region (By similarity). The core attachment region is lost by cleavage (By similarity).</text>
</comment>
<comment type="PTM">
    <molecule>Capsid polyprotein VP90</molecule>
    <text evidence="1">Specific enzymatic cleavages by the host yield mature proteins. VP90 acidic C-terminal domain is eliminated from the immature virion by host caspases during viral maturation giving rise to virions composed of VP70 (By similarity). The virus can then dissociate from cellular membranes and exit the cell (By similarity). Further cleavages by host extracellular proteases occur resulting in the three structural proteins VP34, VP27 and VP25 and conferring infectivity (By similarity).</text>
</comment>
<comment type="miscellaneous">
    <text evidence="7">The sequence shown is that of isolate Newcastle.</text>
</comment>
<comment type="similarity">
    <text evidence="7">Belongs to the astroviridae capsid polyprotein family.</text>
</comment>
<reference key="1">
    <citation type="journal article" date="1993" name="FEMS Microbiol. Lett.">
        <title>Identification and sequence determination of the capsid protein gene of human astrovirus serotype 1.</title>
        <authorList>
            <person name="Willcocks M.M."/>
            <person name="Carter M.J."/>
        </authorList>
    </citation>
    <scope>NUCLEOTIDE SEQUENCE [GENOMIC RNA]</scope>
</reference>
<reference key="2">
    <citation type="journal article" date="1994" name="J. Gen. Virol.">
        <title>The complete sequence of a human astrovirus.</title>
        <authorList>
            <person name="Willcocks M.M."/>
            <person name="Brown T.D."/>
            <person name="Madeley C.R."/>
            <person name="Carter M.J."/>
        </authorList>
    </citation>
    <scope>NUCLEOTIDE SEQUENCE [GENOMIC RNA]</scope>
    <source>
        <strain>Isolate Newcastle</strain>
    </source>
</reference>
<reference key="3">
    <citation type="journal article" date="1994" name="J. Virol.">
        <title>Analysis of astrovirus serotype 1 RNA, identification of the viral RNA-dependent RNA polymerase motif, and expression of a viral structural protein.</title>
        <authorList>
            <person name="Lewis T.L."/>
            <person name="Greenberg H.B."/>
            <person name="Herrmann J.E."/>
            <person name="Smith L.S."/>
            <person name="Matsui S.M."/>
        </authorList>
    </citation>
    <scope>NUCLEOTIDE SEQUENCE [GENOMIC DNA]</scope>
    <source>
        <strain>Oxford</strain>
    </source>
</reference>
<reference key="4">
    <citation type="journal article" date="2020" name="Viruses">
        <title>Protein Disulfide Isomerase A4 Is Involved in Genome Uncoating during Human Astrovirus Cell Entry.</title>
        <authorList>
            <person name="Aguilar-Hernandez N."/>
            <person name="Meyer L."/>
            <person name="Lopez S."/>
            <person name="DuBois R.M."/>
            <person name="Arias C.F."/>
        </authorList>
    </citation>
    <scope>INTERACTION WITH HOST PDIA4 (SPIKE PROTEIN VP25)</scope>
    <scope>FUNCTION (SPIKE PROTEIN VP25)</scope>
    <source>
        <strain>Oxford</strain>
    </source>
</reference>
<reference evidence="9 10" key="5">
    <citation type="journal article" date="2015" name="J. Virol.">
        <title>Structural, Mechanistic, and Antigenic Characterization of the Human Astrovirus Capsid.</title>
        <authorList>
            <person name="York R.L."/>
            <person name="Yousefi P.A."/>
            <person name="Bogdanoff W."/>
            <person name="Haile S."/>
            <person name="Tripathi S."/>
            <person name="DuBois R.M."/>
        </authorList>
    </citation>
    <scope>X-RAY CRYSTALLOGRAPHY (0.95 ANGSTROMS) OF 429-645</scope>
    <scope>X-RAY CRYSTALLOGRAPHY (2.60 ANGSTROMS) OF 80-429</scope>
    <scope>DISULFIDE BONDS</scope>
    <scope>FUNCTION (CAPSID POLYPROTEIN VP70)</scope>
    <scope>FUNCTION (CORE PROTEIN VP34)</scope>
    <scope>FUNCTION (SPIKE PROTEIN VP25)</scope>
    <scope>FUNCTION (SPIKE PROTEIN VP27)</scope>
    <scope>SUBCELLULAR LOCATION (CORE PROTEIN VP34)</scope>
    <scope>SUBCELLULAR LOCATION (SPIKE PROTEIN VP25)</scope>
    <scope>SUBCELLULAR LOCATION (SPIKE PROTEIN VP27)</scope>
    <source>
        <strain>Oxford</strain>
    </source>
</reference>
<feature type="chain" id="PRO_0000320231" description="Capsid polyprotein VP90">
    <location>
        <begin position="1"/>
        <end position="786"/>
    </location>
</feature>
<feature type="chain" id="PRO_0000419554" description="Capsid polyprotein VP70" evidence="2">
    <location>
        <begin position="1"/>
        <end position="657"/>
    </location>
</feature>
<feature type="chain" id="PRO_0000419555" description="Core protein VP34" evidence="2">
    <location>
        <begin position="1"/>
        <end position="313"/>
    </location>
</feature>
<feature type="chain" id="PRO_0000419556" description="Spike protein VP27" evidence="2">
    <location>
        <begin position="394"/>
        <end position="648"/>
    </location>
</feature>
<feature type="chain" id="PRO_0000419557" description="Spike protein VP25" evidence="2">
    <location>
        <begin position="424"/>
        <end position="648"/>
    </location>
</feature>
<feature type="region of interest" description="Basic" evidence="1">
    <location>
        <begin position="1"/>
        <end position="70"/>
    </location>
</feature>
<feature type="region of interest" description="Disordered" evidence="3">
    <location>
        <begin position="1"/>
        <end position="60"/>
    </location>
</feature>
<feature type="region of interest" description="Inner core" evidence="1">
    <location>
        <begin position="71"/>
        <end position="263"/>
    </location>
</feature>
<feature type="region of interest" description="Core attachment" evidence="1">
    <location>
        <begin position="394"/>
        <end position="423"/>
    </location>
</feature>
<feature type="region of interest" description="P2 globular domain" evidence="1">
    <location>
        <begin position="424"/>
        <end position="648"/>
    </location>
</feature>
<feature type="region of interest" description="Disordered" evidence="3">
    <location>
        <begin position="648"/>
        <end position="668"/>
    </location>
</feature>
<feature type="region of interest" description="Acidic" evidence="1">
    <location>
        <begin position="649"/>
        <end position="786"/>
    </location>
</feature>
<feature type="compositionally biased region" description="Polar residues" evidence="3">
    <location>
        <begin position="1"/>
        <end position="13"/>
    </location>
</feature>
<feature type="compositionally biased region" description="Basic residues" evidence="3">
    <location>
        <begin position="19"/>
        <end position="29"/>
    </location>
</feature>
<feature type="site" description="Cleavage" evidence="1">
    <location>
        <begin position="313"/>
        <end position="314"/>
    </location>
</feature>
<feature type="site" description="Cleavage" evidence="1">
    <location>
        <begin position="393"/>
        <end position="394"/>
    </location>
</feature>
<feature type="site" description="Cleavage" evidence="1">
    <location>
        <begin position="423"/>
        <end position="424"/>
    </location>
</feature>
<feature type="site" description="Cleavage" evidence="1">
    <location>
        <begin position="648"/>
        <end position="649"/>
    </location>
</feature>
<feature type="site" description="Cleavage" evidence="2">
    <location>
        <begin position="657"/>
        <end position="658"/>
    </location>
</feature>
<feature type="sequence variant" description="In strain: Oxford." evidence="6">
    <original>S</original>
    <variation>N</variation>
    <location>
        <position position="19"/>
    </location>
</feature>
<feature type="sequence variant" description="In strain: Oxford." evidence="6">
    <original>SG</original>
    <variation>LR</variation>
    <location>
        <begin position="158"/>
        <end position="159"/>
    </location>
</feature>
<feature type="sequence variant" description="In strain: Oxford." evidence="6">
    <original>TTPT</original>
    <variation>STPS</variation>
    <location>
        <begin position="166"/>
        <end position="169"/>
    </location>
</feature>
<feature type="sequence variant" description="In strain: Oxford." evidence="6">
    <original>S</original>
    <variation>P</variation>
    <location>
        <position position="276"/>
    </location>
</feature>
<feature type="sequence variant" description="In strain: Oxford." evidence="6">
    <original>P</original>
    <variation>S</variation>
    <location>
        <position position="292"/>
    </location>
</feature>
<feature type="sequence variant" description="In strain: Oxford." evidence="6">
    <original>F</original>
    <variation>I</variation>
    <location>
        <position position="421"/>
    </location>
</feature>
<feature type="sequence variant" description="In strain: Oxford." evidence="6">
    <original>F</original>
    <variation>Y</variation>
    <location>
        <position position="432"/>
    </location>
</feature>
<feature type="sequence variant" description="In strain: Oxford." evidence="6">
    <original>A</original>
    <variation>S</variation>
    <location>
        <position position="440"/>
    </location>
</feature>
<feature type="sequence variant" description="In strain: Oxford." evidence="6">
    <original>Q</original>
    <variation>K</variation>
    <location>
        <position position="504"/>
    </location>
</feature>
<feature type="sequence variant" description="In strain: Oxford." evidence="6">
    <original>S</original>
    <variation>I</variation>
    <location>
        <position position="512"/>
    </location>
</feature>
<feature type="sequence variant" description="In strain: Oxford." evidence="6">
    <original>I</original>
    <variation>V</variation>
    <location>
        <position position="521"/>
    </location>
</feature>
<feature type="sequence variant" description="In strain: Oxford." evidence="6">
    <original>T</original>
    <variation>I</variation>
    <location>
        <position position="659"/>
    </location>
</feature>
<feature type="sequence variant" description="In strain: Oxford." evidence="6">
    <original>E</original>
    <variation>ED</variation>
    <location>
        <position position="687"/>
    </location>
</feature>
<feature type="sequence variant" description="In strain: Oxford." evidence="6">
    <original>E</original>
    <variation>G</variation>
    <location>
        <position position="704"/>
    </location>
</feature>
<feature type="sequence variant" description="In strain: Oxford." evidence="6">
    <original>A</original>
    <variation>V</variation>
    <location>
        <position position="754"/>
    </location>
</feature>
<feature type="sequence variant" description="In strain: Oxford." evidence="6">
    <original>AGEI</original>
    <variation>VGET</variation>
    <location>
        <begin position="771"/>
        <end position="774"/>
    </location>
</feature>
<feature type="strand" evidence="9">
    <location>
        <begin position="81"/>
        <end position="93"/>
    </location>
</feature>
<feature type="strand" evidence="9">
    <location>
        <begin position="97"/>
        <end position="99"/>
    </location>
</feature>
<feature type="strand" evidence="9">
    <location>
        <begin position="101"/>
        <end position="107"/>
    </location>
</feature>
<feature type="turn" evidence="9">
    <location>
        <begin position="110"/>
        <end position="112"/>
    </location>
</feature>
<feature type="helix" evidence="9">
    <location>
        <begin position="123"/>
        <end position="131"/>
    </location>
</feature>
<feature type="strand" evidence="9">
    <location>
        <begin position="132"/>
        <end position="148"/>
    </location>
</feature>
<feature type="turn" evidence="9">
    <location>
        <begin position="150"/>
        <end position="152"/>
    </location>
</feature>
<feature type="strand" evidence="9">
    <location>
        <begin position="153"/>
        <end position="155"/>
    </location>
</feature>
<feature type="strand" evidence="9">
    <location>
        <begin position="157"/>
        <end position="163"/>
    </location>
</feature>
<feature type="helix" evidence="9">
    <location>
        <begin position="173"/>
        <end position="178"/>
    </location>
</feature>
<feature type="strand" evidence="9">
    <location>
        <begin position="179"/>
        <end position="185"/>
    </location>
</feature>
<feature type="strand" evidence="9">
    <location>
        <begin position="190"/>
        <end position="194"/>
    </location>
</feature>
<feature type="helix" evidence="9">
    <location>
        <begin position="196"/>
        <end position="199"/>
    </location>
</feature>
<feature type="strand" evidence="9">
    <location>
        <begin position="201"/>
        <end position="208"/>
    </location>
</feature>
<feature type="turn" evidence="9">
    <location>
        <begin position="211"/>
        <end position="213"/>
    </location>
</feature>
<feature type="turn" evidence="9">
    <location>
        <begin position="216"/>
        <end position="218"/>
    </location>
</feature>
<feature type="strand" evidence="9">
    <location>
        <begin position="222"/>
        <end position="229"/>
    </location>
</feature>
<feature type="turn" evidence="9">
    <location>
        <begin position="234"/>
        <end position="237"/>
    </location>
</feature>
<feature type="strand" evidence="9">
    <location>
        <begin position="242"/>
        <end position="258"/>
    </location>
</feature>
<feature type="helix" evidence="9">
    <location>
        <begin position="262"/>
        <end position="265"/>
    </location>
</feature>
<feature type="strand" evidence="9">
    <location>
        <begin position="269"/>
        <end position="280"/>
    </location>
</feature>
<feature type="strand" evidence="9">
    <location>
        <begin position="288"/>
        <end position="292"/>
    </location>
</feature>
<feature type="helix" evidence="9">
    <location>
        <begin position="296"/>
        <end position="304"/>
    </location>
</feature>
<feature type="strand" evidence="9">
    <location>
        <begin position="319"/>
        <end position="327"/>
    </location>
</feature>
<feature type="helix" evidence="9">
    <location>
        <begin position="331"/>
        <end position="335"/>
    </location>
</feature>
<feature type="helix" evidence="9">
    <location>
        <begin position="343"/>
        <end position="347"/>
    </location>
</feature>
<feature type="strand" evidence="9">
    <location>
        <begin position="350"/>
        <end position="358"/>
    </location>
</feature>
<feature type="strand" evidence="9">
    <location>
        <begin position="364"/>
        <end position="372"/>
    </location>
</feature>
<feature type="helix" evidence="9">
    <location>
        <begin position="373"/>
        <end position="377"/>
    </location>
</feature>
<feature type="strand" evidence="9">
    <location>
        <begin position="398"/>
        <end position="406"/>
    </location>
</feature>
<feature type="strand" evidence="10">
    <location>
        <begin position="432"/>
        <end position="438"/>
    </location>
</feature>
<feature type="strand" evidence="10">
    <location>
        <begin position="466"/>
        <end position="471"/>
    </location>
</feature>
<feature type="strand" evidence="10">
    <location>
        <begin position="474"/>
        <end position="477"/>
    </location>
</feature>
<feature type="strand" evidence="10">
    <location>
        <begin position="481"/>
        <end position="490"/>
    </location>
</feature>
<feature type="strand" evidence="10">
    <location>
        <begin position="507"/>
        <end position="510"/>
    </location>
</feature>
<feature type="strand" evidence="10">
    <location>
        <begin position="513"/>
        <end position="529"/>
    </location>
</feature>
<feature type="strand" evidence="10">
    <location>
        <begin position="532"/>
        <end position="545"/>
    </location>
</feature>
<feature type="strand" evidence="10">
    <location>
        <begin position="547"/>
        <end position="554"/>
    </location>
</feature>
<feature type="strand" evidence="11">
    <location>
        <begin position="556"/>
        <end position="558"/>
    </location>
</feature>
<feature type="strand" evidence="10">
    <location>
        <begin position="569"/>
        <end position="571"/>
    </location>
</feature>
<feature type="strand" evidence="10">
    <location>
        <begin position="576"/>
        <end position="582"/>
    </location>
</feature>
<feature type="strand" evidence="10">
    <location>
        <begin position="587"/>
        <end position="598"/>
    </location>
</feature>
<feature type="strand" evidence="10">
    <location>
        <begin position="602"/>
        <end position="604"/>
    </location>
</feature>
<feature type="strand" evidence="10">
    <location>
        <begin position="613"/>
        <end position="615"/>
    </location>
</feature>
<feature type="turn" evidence="10">
    <location>
        <begin position="621"/>
        <end position="625"/>
    </location>
</feature>
<feature type="strand" evidence="10">
    <location>
        <begin position="626"/>
        <end position="628"/>
    </location>
</feature>
<feature type="strand" evidence="10">
    <location>
        <begin position="635"/>
        <end position="642"/>
    </location>
</feature>
<organismHost>
    <name type="scientific">Homo sapiens</name>
    <name type="common">Human</name>
    <dbReference type="NCBI Taxonomy" id="9606"/>
</organismHost>
<evidence type="ECO:0000250" key="1">
    <source>
        <dbReference type="UniProtKB" id="Q9IFX1"/>
    </source>
</evidence>
<evidence type="ECO:0000255" key="2"/>
<evidence type="ECO:0000256" key="3">
    <source>
        <dbReference type="SAM" id="MobiDB-lite"/>
    </source>
</evidence>
<evidence type="ECO:0000269" key="4">
    <source>
    </source>
</evidence>
<evidence type="ECO:0000269" key="5">
    <source>
    </source>
</evidence>
<evidence type="ECO:0000269" key="6">
    <source>
    </source>
</evidence>
<evidence type="ECO:0000305" key="7"/>
<evidence type="ECO:0000305" key="8">
    <source>
    </source>
</evidence>
<evidence type="ECO:0007829" key="9">
    <source>
        <dbReference type="PDB" id="5EWN"/>
    </source>
</evidence>
<evidence type="ECO:0007829" key="10">
    <source>
        <dbReference type="PDB" id="5EWO"/>
    </source>
</evidence>
<evidence type="ECO:0007829" key="11">
    <source>
        <dbReference type="PDB" id="9CBN"/>
    </source>
</evidence>
<name>CAPSD_HASV1</name>
<organism>
    <name type="scientific">Human astrovirus-1</name>
    <name type="common">HAstV-1</name>
    <dbReference type="NCBI Taxonomy" id="12456"/>
    <lineage>
        <taxon>Viruses</taxon>
        <taxon>Riboviria</taxon>
        <taxon>Orthornavirae</taxon>
        <taxon>Pisuviricota</taxon>
        <taxon>Stelpaviricetes</taxon>
        <taxon>Stellavirales</taxon>
        <taxon>Astroviridae</taxon>
        <taxon>Mamastrovirus</taxon>
        <taxon>Mamastrovirus 1</taxon>
    </lineage>
</organism>
<protein>
    <recommendedName>
        <fullName>Capsid polyprotein VP90</fullName>
    </recommendedName>
    <component>
        <recommendedName>
            <fullName>Capsid polyprotein VP70</fullName>
        </recommendedName>
    </component>
    <component>
        <recommendedName>
            <fullName>Core protein VP34</fullName>
        </recommendedName>
    </component>
    <component>
        <recommendedName>
            <fullName>Spike protein VP27</fullName>
        </recommendedName>
    </component>
    <component>
        <recommendedName>
            <fullName>Spike protein VP25</fullName>
        </recommendedName>
    </component>
</protein>
<gene>
    <name type="ORF">ORF2</name>
</gene>
<sequence>MASKSNKQVTVEVSNNGRSRSKSRARSQSRGRDKSVKITVNSRNRARRQPGRDKRQSSQRVRNIVNKQLRKQGVTGPKPAICQRATATLGTVGSNTSGTTEIEACILLNPVLVKDATGSTQFGPVQALGAQYSMWKLKYLNVKLTSMVGASAVNGTVSGVSLNPTTTPTSTSWSGLGARKHLDVTVGKNATFKLKPSDLGGPRDGWWLTNTNDNASDTLGPSIEIHTLGRTMSSYKNEQFTGGLFLVELASEWCFTGYAANPNLVNLVKSTDNQVSVTFEGSAGSPLIMNVPEGSHFARTVLARSTTPTTLARAGERTTSDTVWQVLNTAVSAAELVTPPPFNWLVKGGWWFVKLIAGRTRTGSRSFYVYPSYQDALSNKPALCTGSTPGGMRTRNPVTTTLQFTQMNQPSLGHGEAPAAFGRSIPAPGEEFKVVLTFGAPMSPNANNKQTWVNKPLDAPSGHYNVKIAKDVDHYLTMQGFTSIASVDWYTIDFQPSEAPAPIQGLQVLVNSSKKADVYAIKQFVTAQTNNKHQVTSLFLVKVTTGFQVNNYLSYFYRASATGDATTNLLVRGDTYTAGISFTQGGWYLLTNTSIVDGAMPPGWVWNNVELKTNTAYHMDKGLVHLIMPLPESTQMCYEMLTSIPRSRASGHGYESDNTEYLDAPDSADQFKEDIETDTDIESTEDEDEADRFDIIDTSDEEDENETDRVTLLSTLVNQGMTMTRATRIARRAFPTLSDRIKRGVYMDLLVSGASPGNAWSHACEEARKAAGEINPCTSGSRGHAE</sequence>
<proteinExistence type="evidence at protein level"/>